<proteinExistence type="inferred from homology"/>
<gene>
    <name type="primary">Apoa1</name>
</gene>
<reference key="1">
    <citation type="submission" date="2014-11" db="EMBL/GenBank/DDBJ databases">
        <authorList>
            <person name="Liu Y."/>
            <person name="Qu J."/>
            <person name="Gnerre S."/>
            <person name="Cree A."/>
            <person name="Dinh H."/>
            <person name="Dugan S."/>
            <person name="Jhangiani S."/>
            <person name="Lee S.L."/>
            <person name="Nazareth L."/>
            <person name="Okwuonu G."/>
            <person name="Santibanez J."/>
            <person name="Anosike U."/>
            <person name="Bandaranaike D."/>
            <person name="Bickham C."/>
            <person name="Chao H."/>
            <person name="Chavez A."/>
            <person name="Dahdouli M."/>
            <person name="Dao M."/>
            <person name="Davila M."/>
            <person name="Davy-Carroll L."/>
            <person name="Denson S."/>
            <person name="Falls T."/>
            <person name="Fernandez S."/>
            <person name="Fernando P."/>
            <person name="Francis C."/>
            <person name="Ganer J."/>
            <person name="Garcia R. III"/>
            <person name="Gross S."/>
            <person name="Hale W."/>
            <person name="Heiman D."/>
            <person name="Hollins B."/>
            <person name="Javaid M."/>
            <person name="Johnson B."/>
            <person name="Jones J."/>
            <person name="Joshi V."/>
            <person name="Kalu J."/>
            <person name="Kisamo H."/>
            <person name="Largo L."/>
            <person name="Le T."/>
            <person name="Leal B."/>
            <person name="Legall F. III"/>
            <person name="Lemon S."/>
            <person name="Lewis L."/>
            <person name="Lopez J."/>
            <person name="Martinez E."/>
            <person name="Matakis S."/>
            <person name="Mercado I."/>
            <person name="Munidasa M."/>
            <person name="Narasimhan A."/>
            <person name="Ng B."/>
            <person name="Ngo D."/>
            <person name="Nguyen L."/>
            <person name="Obregon M."/>
            <person name="Ongeri F."/>
            <person name="Onwere C."/>
            <person name="Osuji N."/>
            <person name="Parra A."/>
            <person name="Perez A."/>
            <person name="Perez Y."/>
            <person name="Pham C."/>
            <person name="Primus E."/>
            <person name="Puazo R."/>
            <person name="Qi S."/>
            <person name="Qu C."/>
            <person name="Quiroz J."/>
            <person name="Raj R."/>
            <person name="Rajbhandari K."/>
            <person name="Ruiz S."/>
            <person name="Schneider B."/>
            <person name="Simmons D."/>
            <person name="Sisson I."/>
            <person name="Skinner E."/>
            <person name="Thornton R."/>
            <person name="Usmani K."/>
            <person name="Walker D."/>
            <person name="White C."/>
            <person name="Williams A."/>
            <person name="Woodworth J."/>
            <person name="Wright R."/>
            <person name="Young S."/>
            <person name="Yun X."/>
            <person name="Han Y."/>
            <person name="Kovar C."/>
            <person name="Reid J.G."/>
            <person name="Weinstock G."/>
            <person name="Doddapaneni H."/>
            <person name="Muzny D.M."/>
            <person name="Worley K.C."/>
            <person name="Gibbs R.A."/>
        </authorList>
    </citation>
    <scope>NUCLEOTIDE SEQUENCE [LARGE SCALE GENOMIC DNA]</scope>
    <source>
        <tissue>Kidney</tissue>
    </source>
</reference>
<sequence>MKAVVLAVAALFLAGGEARHFWQRDEPQASPWDKIKEFTTQYVDSVKDSGSEYLKQFETSALGTQMNLKLTENLDTLSSTFSKLREQLGPVTQEFWQNLEKDTEWLRQEMNKDLADMKQKVQPYMEQFQKTWQEEVERYRQKVEPLSTELREGARQKLQELQEKLAPLGADLRDSARVHVDALRTQLAPYSEQMRERLAERLAALRDSPSLAEYQAKAHEHLKTLHEKAQPALSDLGQGVLPVLESLKATLVGAIEEASKKLSSQ</sequence>
<evidence type="ECO:0000250" key="1"/>
<evidence type="ECO:0000250" key="2">
    <source>
        <dbReference type="UniProtKB" id="G5BQH5"/>
    </source>
</evidence>
<evidence type="ECO:0000250" key="3">
    <source>
        <dbReference type="UniProtKB" id="P02647"/>
    </source>
</evidence>
<evidence type="ECO:0000250" key="4">
    <source>
        <dbReference type="UniProtKB" id="P02648"/>
    </source>
</evidence>
<evidence type="ECO:0000250" key="5">
    <source>
        <dbReference type="UniProtKB" id="P04639"/>
    </source>
</evidence>
<evidence type="ECO:0000255" key="6"/>
<evidence type="ECO:0000305" key="7"/>
<protein>
    <recommendedName>
        <fullName>Apolipoprotein A-I</fullName>
        <shortName>Apo-AI</shortName>
        <shortName>ApoA-I</shortName>
    </recommendedName>
    <component>
        <recommendedName>
            <fullName>Proapolipoprotein A-I</fullName>
            <shortName>ProapoA-I</shortName>
        </recommendedName>
    </component>
    <component>
        <recommendedName>
            <fullName>Truncated apolipoprotein A-I</fullName>
        </recommendedName>
    </component>
</protein>
<dbReference type="RefSeq" id="XP_012865101.1">
    <property type="nucleotide sequence ID" value="XM_013009647.1"/>
</dbReference>
<dbReference type="SMR" id="A0A1S3EL69"/>
<dbReference type="STRING" id="10020.ENSDORP00000011659"/>
<dbReference type="GeneID" id="105980742"/>
<dbReference type="KEGG" id="dord:105980742"/>
<dbReference type="CTD" id="335"/>
<dbReference type="InParanoid" id="A0A1S3EL69"/>
<dbReference type="OrthoDB" id="8727817at2759"/>
<dbReference type="Proteomes" id="UP000081671">
    <property type="component" value="Unplaced"/>
</dbReference>
<dbReference type="GO" id="GO:0042627">
    <property type="term" value="C:chylomicron"/>
    <property type="evidence" value="ECO:0007669"/>
    <property type="project" value="TreeGrafter"/>
</dbReference>
<dbReference type="GO" id="GO:1903561">
    <property type="term" value="C:extracellular vesicle"/>
    <property type="evidence" value="ECO:0007669"/>
    <property type="project" value="TreeGrafter"/>
</dbReference>
<dbReference type="GO" id="GO:0034364">
    <property type="term" value="C:high-density lipoprotein particle"/>
    <property type="evidence" value="ECO:0007669"/>
    <property type="project" value="UniProtKB-KW"/>
</dbReference>
<dbReference type="GO" id="GO:0034362">
    <property type="term" value="C:low-density lipoprotein particle"/>
    <property type="evidence" value="ECO:0007669"/>
    <property type="project" value="TreeGrafter"/>
</dbReference>
<dbReference type="GO" id="GO:0034361">
    <property type="term" value="C:very-low-density lipoprotein particle"/>
    <property type="evidence" value="ECO:0007669"/>
    <property type="project" value="TreeGrafter"/>
</dbReference>
<dbReference type="GO" id="GO:0120020">
    <property type="term" value="F:cholesterol transfer activity"/>
    <property type="evidence" value="ECO:0007669"/>
    <property type="project" value="TreeGrafter"/>
</dbReference>
<dbReference type="GO" id="GO:0060228">
    <property type="term" value="F:phosphatidylcholine-sterol O-acyltransferase activator activity"/>
    <property type="evidence" value="ECO:0007669"/>
    <property type="project" value="TreeGrafter"/>
</dbReference>
<dbReference type="GO" id="GO:0005543">
    <property type="term" value="F:phospholipid binding"/>
    <property type="evidence" value="ECO:0007669"/>
    <property type="project" value="TreeGrafter"/>
</dbReference>
<dbReference type="GO" id="GO:0042803">
    <property type="term" value="F:protein homodimerization activity"/>
    <property type="evidence" value="ECO:0000250"/>
    <property type="project" value="UniProtKB"/>
</dbReference>
<dbReference type="GO" id="GO:0055090">
    <property type="term" value="P:acylglycerol homeostasis"/>
    <property type="evidence" value="ECO:0007669"/>
    <property type="project" value="TreeGrafter"/>
</dbReference>
<dbReference type="GO" id="GO:0033344">
    <property type="term" value="P:cholesterol efflux"/>
    <property type="evidence" value="ECO:0007669"/>
    <property type="project" value="TreeGrafter"/>
</dbReference>
<dbReference type="GO" id="GO:0008203">
    <property type="term" value="P:cholesterol metabolic process"/>
    <property type="evidence" value="ECO:0007669"/>
    <property type="project" value="UniProtKB-KW"/>
</dbReference>
<dbReference type="GO" id="GO:0042157">
    <property type="term" value="P:lipoprotein metabolic process"/>
    <property type="evidence" value="ECO:0007669"/>
    <property type="project" value="InterPro"/>
</dbReference>
<dbReference type="GO" id="GO:0033700">
    <property type="term" value="P:phospholipid efflux"/>
    <property type="evidence" value="ECO:0007669"/>
    <property type="project" value="TreeGrafter"/>
</dbReference>
<dbReference type="FunFam" id="1.20.120.20:FF:000001">
    <property type="entry name" value="Apolipoprotein A-I"/>
    <property type="match status" value="1"/>
</dbReference>
<dbReference type="FunFam" id="1.20.5.20:FF:000001">
    <property type="entry name" value="apolipoprotein A-I"/>
    <property type="match status" value="1"/>
</dbReference>
<dbReference type="Gene3D" id="1.20.5.20">
    <property type="match status" value="1"/>
</dbReference>
<dbReference type="Gene3D" id="6.10.140.380">
    <property type="match status" value="1"/>
</dbReference>
<dbReference type="Gene3D" id="1.20.120.20">
    <property type="entry name" value="Apolipoprotein"/>
    <property type="match status" value="1"/>
</dbReference>
<dbReference type="InterPro" id="IPR000074">
    <property type="entry name" value="ApoA_E"/>
</dbReference>
<dbReference type="InterPro" id="IPR050163">
    <property type="entry name" value="Apolipoprotein_A1/A4/E"/>
</dbReference>
<dbReference type="PANTHER" id="PTHR18976">
    <property type="entry name" value="APOLIPOPROTEIN"/>
    <property type="match status" value="1"/>
</dbReference>
<dbReference type="PANTHER" id="PTHR18976:SF11">
    <property type="entry name" value="APOLIPOPROTEIN A-I"/>
    <property type="match status" value="1"/>
</dbReference>
<dbReference type="Pfam" id="PF01442">
    <property type="entry name" value="Apolipoprotein"/>
    <property type="match status" value="1"/>
</dbReference>
<dbReference type="SUPFAM" id="SSF58113">
    <property type="entry name" value="Apolipoprotein A-I"/>
    <property type="match status" value="1"/>
</dbReference>
<organism>
    <name type="scientific">Dipodomys ordii</name>
    <name type="common">Ord's kangaroo rat</name>
    <dbReference type="NCBI Taxonomy" id="10020"/>
    <lineage>
        <taxon>Eukaryota</taxon>
        <taxon>Metazoa</taxon>
        <taxon>Chordata</taxon>
        <taxon>Craniata</taxon>
        <taxon>Vertebrata</taxon>
        <taxon>Euteleostomi</taxon>
        <taxon>Mammalia</taxon>
        <taxon>Eutheria</taxon>
        <taxon>Euarchontoglires</taxon>
        <taxon>Glires</taxon>
        <taxon>Rodentia</taxon>
        <taxon>Castorimorpha</taxon>
        <taxon>Heteromyidae</taxon>
        <taxon>Dipodomyinae</taxon>
        <taxon>Dipodomys</taxon>
    </lineage>
</organism>
<feature type="signal peptide" evidence="6">
    <location>
        <begin position="1"/>
        <end position="18"/>
    </location>
</feature>
<feature type="chain" id="PRO_5010248087" description="Proapolipoprotein A-I">
    <location>
        <begin position="19"/>
        <end position="265"/>
    </location>
</feature>
<feature type="chain" id="PRO_0000450135" description="Apolipoprotein A-I">
    <location>
        <begin position="25"/>
        <end position="265"/>
    </location>
</feature>
<feature type="chain" id="PRO_0000450136" description="Truncated apolipoprotein A-I" evidence="3">
    <location>
        <begin position="25"/>
        <end position="264"/>
    </location>
</feature>
<feature type="repeat" description="1">
    <location>
        <begin position="68"/>
        <end position="89"/>
    </location>
</feature>
<feature type="repeat" description="2">
    <location>
        <begin position="90"/>
        <end position="111"/>
    </location>
</feature>
<feature type="repeat" description="3; half-length">
    <location>
        <begin position="112"/>
        <end position="122"/>
    </location>
</feature>
<feature type="repeat" description="4">
    <location>
        <begin position="123"/>
        <end position="144"/>
    </location>
</feature>
<feature type="repeat" description="5">
    <location>
        <begin position="145"/>
        <end position="166"/>
    </location>
</feature>
<feature type="repeat" description="6">
    <location>
        <begin position="167"/>
        <end position="188"/>
    </location>
</feature>
<feature type="repeat" description="7; truncated">
    <location>
        <begin position="189"/>
        <end position="208"/>
    </location>
</feature>
<feature type="repeat" description="8">
    <location>
        <begin position="209"/>
        <end position="230"/>
    </location>
</feature>
<feature type="repeat" description="9; half-length">
    <location>
        <begin position="231"/>
        <end position="241"/>
    </location>
</feature>
<feature type="repeat" description="10">
    <location>
        <begin position="242"/>
        <end position="265"/>
    </location>
</feature>
<feature type="region of interest" description="10 X approximate tandem repeats">
    <location>
        <begin position="68"/>
        <end position="265"/>
    </location>
</feature>
<feature type="modified residue" description="Methionine sulfoxide" evidence="3">
    <location>
        <position position="110"/>
    </location>
</feature>
<feature type="modified residue" description="Methionine sulfoxide" evidence="3">
    <location>
        <position position="194"/>
    </location>
</feature>
<accession>A0A1S3EL69</accession>
<comment type="function">
    <text evidence="3">Participates in the reverse transport of cholesterol from tissues to the liver for excretion by promoting cholesterol efflux from tissues and by acting as a cofactor for the lecithin cholesterol acyltransferase (LCAT). As part of the SPAP complex, activates spermatozoa motility.</text>
</comment>
<comment type="subunit">
    <text evidence="2 3 5">Homodimer (By similarity). Interacts with APOA1BP and CLU. Component of a sperm activating protein complex (SPAP), consisting of APOA1, an immunoglobulin heavy chain, an immunoglobulin light chain and albumin. Interacts with NDRG1. Interacts with SCGB3A2 (By similarity). Interacts with NAXE and YJEFN3 (By similarity).</text>
</comment>
<comment type="subcellular location">
    <subcellularLocation>
        <location evidence="3">Secreted</location>
    </subcellularLocation>
</comment>
<comment type="PTM">
    <text evidence="4">Glycosylated.</text>
</comment>
<comment type="PTM">
    <text evidence="4">Palmitoylated.</text>
</comment>
<comment type="PTM">
    <text evidence="1">Phosphorylation sites are present in the extracellular medium.</text>
</comment>
<comment type="similarity">
    <text evidence="7">Belongs to the apolipoprotein A1/A4/E family.</text>
</comment>
<keyword id="KW-0153">Cholesterol metabolism</keyword>
<keyword id="KW-0325">Glycoprotein</keyword>
<keyword id="KW-0345">HDL</keyword>
<keyword id="KW-0443">Lipid metabolism</keyword>
<keyword id="KW-0445">Lipid transport</keyword>
<keyword id="KW-0449">Lipoprotein</keyword>
<keyword id="KW-0558">Oxidation</keyword>
<keyword id="KW-0564">Palmitate</keyword>
<keyword id="KW-0597">Phosphoprotein</keyword>
<keyword id="KW-1185">Reference proteome</keyword>
<keyword id="KW-0677">Repeat</keyword>
<keyword id="KW-0964">Secreted</keyword>
<keyword id="KW-0732">Signal</keyword>
<keyword id="KW-0753">Steroid metabolism</keyword>
<keyword id="KW-1207">Sterol metabolism</keyword>
<keyword id="KW-0813">Transport</keyword>
<name>APOA1_DIPOR</name>